<keyword id="KW-0004">4Fe-4S</keyword>
<keyword id="KW-0997">Cell inner membrane</keyword>
<keyword id="KW-1003">Cell membrane</keyword>
<keyword id="KW-0249">Electron transport</keyword>
<keyword id="KW-0408">Iron</keyword>
<keyword id="KW-0411">Iron-sulfur</keyword>
<keyword id="KW-0472">Membrane</keyword>
<keyword id="KW-0479">Metal-binding</keyword>
<keyword id="KW-0677">Repeat</keyword>
<keyword id="KW-1278">Translocase</keyword>
<keyword id="KW-0813">Transport</keyword>
<protein>
    <recommendedName>
        <fullName evidence="1">Ion-translocating oxidoreductase complex subunit B</fullName>
        <ecNumber evidence="1">7.-.-.-</ecNumber>
    </recommendedName>
    <alternativeName>
        <fullName evidence="1">Rnf electron transport complex subunit B</fullName>
    </alternativeName>
</protein>
<organism>
    <name type="scientific">Pseudomonas aeruginosa (strain UCBPP-PA14)</name>
    <dbReference type="NCBI Taxonomy" id="208963"/>
    <lineage>
        <taxon>Bacteria</taxon>
        <taxon>Pseudomonadati</taxon>
        <taxon>Pseudomonadota</taxon>
        <taxon>Gammaproteobacteria</taxon>
        <taxon>Pseudomonadales</taxon>
        <taxon>Pseudomonadaceae</taxon>
        <taxon>Pseudomonas</taxon>
    </lineage>
</organism>
<name>RNFB_PSEAB</name>
<feature type="chain" id="PRO_1000013649" description="Ion-translocating oxidoreductase complex subunit B">
    <location>
        <begin position="1"/>
        <end position="188"/>
    </location>
</feature>
<feature type="domain" description="4Fe-4S" evidence="1">
    <location>
        <begin position="32"/>
        <end position="90"/>
    </location>
</feature>
<feature type="domain" description="4Fe-4S ferredoxin-type 1" evidence="1">
    <location>
        <begin position="104"/>
        <end position="133"/>
    </location>
</feature>
<feature type="domain" description="4Fe-4S ferredoxin-type 2" evidence="1">
    <location>
        <begin position="134"/>
        <end position="163"/>
    </location>
</feature>
<feature type="region of interest" description="Hydrophobic" evidence="1">
    <location>
        <begin position="1"/>
        <end position="26"/>
    </location>
</feature>
<feature type="binding site" evidence="1">
    <location>
        <position position="49"/>
    </location>
    <ligand>
        <name>[4Fe-4S] cluster</name>
        <dbReference type="ChEBI" id="CHEBI:49883"/>
        <label>1</label>
    </ligand>
</feature>
<feature type="binding site" evidence="1">
    <location>
        <position position="52"/>
    </location>
    <ligand>
        <name>[4Fe-4S] cluster</name>
        <dbReference type="ChEBI" id="CHEBI:49883"/>
        <label>1</label>
    </ligand>
</feature>
<feature type="binding site" evidence="1">
    <location>
        <position position="57"/>
    </location>
    <ligand>
        <name>[4Fe-4S] cluster</name>
        <dbReference type="ChEBI" id="CHEBI:49883"/>
        <label>1</label>
    </ligand>
</feature>
<feature type="binding site" evidence="1">
    <location>
        <position position="73"/>
    </location>
    <ligand>
        <name>[4Fe-4S] cluster</name>
        <dbReference type="ChEBI" id="CHEBI:49883"/>
        <label>1</label>
    </ligand>
</feature>
<feature type="binding site" evidence="1">
    <location>
        <position position="113"/>
    </location>
    <ligand>
        <name>[4Fe-4S] cluster</name>
        <dbReference type="ChEBI" id="CHEBI:49883"/>
        <label>2</label>
    </ligand>
</feature>
<feature type="binding site" evidence="1">
    <location>
        <position position="116"/>
    </location>
    <ligand>
        <name>[4Fe-4S] cluster</name>
        <dbReference type="ChEBI" id="CHEBI:49883"/>
        <label>2</label>
    </ligand>
</feature>
<feature type="binding site" evidence="1">
    <location>
        <position position="119"/>
    </location>
    <ligand>
        <name>[4Fe-4S] cluster</name>
        <dbReference type="ChEBI" id="CHEBI:49883"/>
        <label>2</label>
    </ligand>
</feature>
<feature type="binding site" evidence="1">
    <location>
        <position position="123"/>
    </location>
    <ligand>
        <name>[4Fe-4S] cluster</name>
        <dbReference type="ChEBI" id="CHEBI:49883"/>
        <label>3</label>
    </ligand>
</feature>
<feature type="binding site" evidence="1">
    <location>
        <position position="143"/>
    </location>
    <ligand>
        <name>[4Fe-4S] cluster</name>
        <dbReference type="ChEBI" id="CHEBI:49883"/>
        <label>3</label>
    </ligand>
</feature>
<feature type="binding site" evidence="1">
    <location>
        <position position="146"/>
    </location>
    <ligand>
        <name>[4Fe-4S] cluster</name>
        <dbReference type="ChEBI" id="CHEBI:49883"/>
        <label>3</label>
    </ligand>
</feature>
<feature type="binding site" evidence="1">
    <location>
        <position position="149"/>
    </location>
    <ligand>
        <name>[4Fe-4S] cluster</name>
        <dbReference type="ChEBI" id="CHEBI:49883"/>
        <label>3</label>
    </ligand>
</feature>
<feature type="binding site" evidence="1">
    <location>
        <position position="153"/>
    </location>
    <ligand>
        <name>[4Fe-4S] cluster</name>
        <dbReference type="ChEBI" id="CHEBI:49883"/>
        <label>2</label>
    </ligand>
</feature>
<reference key="1">
    <citation type="journal article" date="2006" name="Genome Biol.">
        <title>Genomic analysis reveals that Pseudomonas aeruginosa virulence is combinatorial.</title>
        <authorList>
            <person name="Lee D.G."/>
            <person name="Urbach J.M."/>
            <person name="Wu G."/>
            <person name="Liberati N.T."/>
            <person name="Feinbaum R.L."/>
            <person name="Miyata S."/>
            <person name="Diggins L.T."/>
            <person name="He J."/>
            <person name="Saucier M."/>
            <person name="Deziel E."/>
            <person name="Friedman L."/>
            <person name="Li L."/>
            <person name="Grills G."/>
            <person name="Montgomery K."/>
            <person name="Kucherlapati R."/>
            <person name="Rahme L.G."/>
            <person name="Ausubel F.M."/>
        </authorList>
    </citation>
    <scope>NUCLEOTIDE SEQUENCE [LARGE SCALE GENOMIC DNA]</scope>
    <source>
        <strain>UCBPP-PA14</strain>
    </source>
</reference>
<gene>
    <name evidence="1" type="primary">rnfB</name>
    <name type="ordered locus">PA14_18930</name>
</gene>
<sequence length="188" mass="20013">MNGVFLAIGALLPICLAGGALLGYAAVRFRVQGDPVAEQVNALLPQTQCGQCGYPGCKPYAEAIAAGDKINKCPPGGEATIRALADLLDLEPEPLDAAEETPPRVAYIREAECIGCTKCIQACPVDAIVGAARLMHTVIADECTGCDLCLEPCPVDCIEMRETPDDVRHWKWPQPSPRLIASDRERAA</sequence>
<evidence type="ECO:0000255" key="1">
    <source>
        <dbReference type="HAMAP-Rule" id="MF_00463"/>
    </source>
</evidence>
<proteinExistence type="inferred from homology"/>
<accession>Q02QX9</accession>
<comment type="function">
    <text evidence="1">Part of a membrane-bound complex that couples electron transfer with translocation of ions across the membrane.</text>
</comment>
<comment type="cofactor">
    <cofactor evidence="1">
        <name>[4Fe-4S] cluster</name>
        <dbReference type="ChEBI" id="CHEBI:49883"/>
    </cofactor>
    <text evidence="1">Binds 3 [4Fe-4S] clusters.</text>
</comment>
<comment type="subunit">
    <text evidence="1">The complex is composed of six subunits: RnfA, RnfB, RnfC, RnfD, RnfE and RnfG.</text>
</comment>
<comment type="subcellular location">
    <subcellularLocation>
        <location evidence="1">Cell inner membrane</location>
    </subcellularLocation>
</comment>
<comment type="similarity">
    <text evidence="1">Belongs to the 4Fe4S bacterial-type ferredoxin family. RnfB subfamily.</text>
</comment>
<dbReference type="EC" id="7.-.-.-" evidence="1"/>
<dbReference type="EMBL" id="CP000438">
    <property type="protein sequence ID" value="ABJ12743.1"/>
    <property type="molecule type" value="Genomic_DNA"/>
</dbReference>
<dbReference type="SMR" id="Q02QX9"/>
<dbReference type="KEGG" id="pau:PA14_18930"/>
<dbReference type="PseudoCAP" id="PA14_18930"/>
<dbReference type="HOGENOM" id="CLU_063448_2_0_6"/>
<dbReference type="BioCyc" id="PAER208963:G1G74-1561-MONOMER"/>
<dbReference type="Proteomes" id="UP000000653">
    <property type="component" value="Chromosome"/>
</dbReference>
<dbReference type="GO" id="GO:0005886">
    <property type="term" value="C:plasma membrane"/>
    <property type="evidence" value="ECO:0007669"/>
    <property type="project" value="UniProtKB-SubCell"/>
</dbReference>
<dbReference type="GO" id="GO:0051539">
    <property type="term" value="F:4 iron, 4 sulfur cluster binding"/>
    <property type="evidence" value="ECO:0007669"/>
    <property type="project" value="UniProtKB-UniRule"/>
</dbReference>
<dbReference type="GO" id="GO:0009055">
    <property type="term" value="F:electron transfer activity"/>
    <property type="evidence" value="ECO:0007669"/>
    <property type="project" value="InterPro"/>
</dbReference>
<dbReference type="GO" id="GO:0046872">
    <property type="term" value="F:metal ion binding"/>
    <property type="evidence" value="ECO:0007669"/>
    <property type="project" value="UniProtKB-KW"/>
</dbReference>
<dbReference type="GO" id="GO:0022900">
    <property type="term" value="P:electron transport chain"/>
    <property type="evidence" value="ECO:0007669"/>
    <property type="project" value="UniProtKB-UniRule"/>
</dbReference>
<dbReference type="FunFam" id="1.10.15.40:FF:000001">
    <property type="entry name" value="Ion-translocating oxidoreductase complex subunit B"/>
    <property type="match status" value="1"/>
</dbReference>
<dbReference type="Gene3D" id="3.30.70.20">
    <property type="match status" value="1"/>
</dbReference>
<dbReference type="Gene3D" id="1.10.15.40">
    <property type="entry name" value="Electron transport complex subunit B, putative Fe-S cluster"/>
    <property type="match status" value="1"/>
</dbReference>
<dbReference type="HAMAP" id="MF_00463">
    <property type="entry name" value="RsxB_RnfB"/>
    <property type="match status" value="1"/>
</dbReference>
<dbReference type="InterPro" id="IPR007202">
    <property type="entry name" value="4Fe-4S_dom"/>
</dbReference>
<dbReference type="InterPro" id="IPR017896">
    <property type="entry name" value="4Fe4S_Fe-S-bd"/>
</dbReference>
<dbReference type="InterPro" id="IPR017900">
    <property type="entry name" value="4Fe4S_Fe_S_CS"/>
</dbReference>
<dbReference type="InterPro" id="IPR010207">
    <property type="entry name" value="Elect_transpt_cplx_RnfB/RsxB"/>
</dbReference>
<dbReference type="InterPro" id="IPR016463">
    <property type="entry name" value="RnfB/RsxB_Proteobac"/>
</dbReference>
<dbReference type="InterPro" id="IPR050294">
    <property type="entry name" value="RnfB_subfamily"/>
</dbReference>
<dbReference type="NCBIfam" id="NF003475">
    <property type="entry name" value="PRK05113.1"/>
    <property type="match status" value="1"/>
</dbReference>
<dbReference type="NCBIfam" id="TIGR01944">
    <property type="entry name" value="rnfB"/>
    <property type="match status" value="1"/>
</dbReference>
<dbReference type="PANTHER" id="PTHR42859:SF3">
    <property type="entry name" value="ION-TRANSLOCATING OXIDOREDUCTASE COMPLEX SUBUNIT B"/>
    <property type="match status" value="1"/>
</dbReference>
<dbReference type="PANTHER" id="PTHR42859">
    <property type="entry name" value="OXIDOREDUCTASE"/>
    <property type="match status" value="1"/>
</dbReference>
<dbReference type="Pfam" id="PF14697">
    <property type="entry name" value="Fer4_21"/>
    <property type="match status" value="1"/>
</dbReference>
<dbReference type="Pfam" id="PF04060">
    <property type="entry name" value="FeS"/>
    <property type="match status" value="1"/>
</dbReference>
<dbReference type="PIRSF" id="PIRSF005784">
    <property type="entry name" value="Elect_transpt_RnfB"/>
    <property type="match status" value="1"/>
</dbReference>
<dbReference type="SUPFAM" id="SSF54862">
    <property type="entry name" value="4Fe-4S ferredoxins"/>
    <property type="match status" value="1"/>
</dbReference>
<dbReference type="PROSITE" id="PS51656">
    <property type="entry name" value="4FE4S"/>
    <property type="match status" value="1"/>
</dbReference>
<dbReference type="PROSITE" id="PS00198">
    <property type="entry name" value="4FE4S_FER_1"/>
    <property type="match status" value="2"/>
</dbReference>
<dbReference type="PROSITE" id="PS51379">
    <property type="entry name" value="4FE4S_FER_2"/>
    <property type="match status" value="2"/>
</dbReference>